<keyword id="KW-0063">Aspartyl esterase</keyword>
<keyword id="KW-0134">Cell wall</keyword>
<keyword id="KW-0961">Cell wall biogenesis/degradation</keyword>
<keyword id="KW-1015">Disulfide bond</keyword>
<keyword id="KW-0325">Glycoprotein</keyword>
<keyword id="KW-0333">Golgi apparatus</keyword>
<keyword id="KW-0378">Hydrolase</keyword>
<keyword id="KW-0472">Membrane</keyword>
<keyword id="KW-1185">Reference proteome</keyword>
<keyword id="KW-0964">Secreted</keyword>
<keyword id="KW-0732">Signal</keyword>
<keyword id="KW-0346">Stress response</keyword>
<reference key="1">
    <citation type="journal article" date="1994" name="FEBS Lett.">
        <title>Molecular cloning and characterisation of a putative pectin methylesterase cDNA in Arabidopsis thaliana (L.).</title>
        <authorList>
            <person name="Richard L."/>
            <person name="Qin L.X."/>
            <person name="Gadal P."/>
            <person name="Goldberg R."/>
        </authorList>
    </citation>
    <scope>NUCLEOTIDE SEQUENCE [MRNA]</scope>
    <source>
        <strain>cv. Columbia</strain>
        <tissue>Shoot</tissue>
    </source>
</reference>
<reference key="2">
    <citation type="journal article" date="1996" name="Gene">
        <title>Clustered genes within the genome of Arabidopsis thaliana encoding pectin methylesterase-like enzymes.</title>
        <authorList>
            <person name="Richard L."/>
            <person name="Qin L.X."/>
            <person name="Goldberg R."/>
        </authorList>
    </citation>
    <scope>NUCLEOTIDE SEQUENCE [GENOMIC DNA]</scope>
</reference>
<reference key="3">
    <citation type="journal article" date="2000" name="Nature">
        <title>Sequence and analysis of chromosome 1 of the plant Arabidopsis thaliana.</title>
        <authorList>
            <person name="Theologis A."/>
            <person name="Ecker J.R."/>
            <person name="Palm C.J."/>
            <person name="Federspiel N.A."/>
            <person name="Kaul S."/>
            <person name="White O."/>
            <person name="Alonso J."/>
            <person name="Altafi H."/>
            <person name="Araujo R."/>
            <person name="Bowman C.L."/>
            <person name="Brooks S.Y."/>
            <person name="Buehler E."/>
            <person name="Chan A."/>
            <person name="Chao Q."/>
            <person name="Chen H."/>
            <person name="Cheuk R.F."/>
            <person name="Chin C.W."/>
            <person name="Chung M.K."/>
            <person name="Conn L."/>
            <person name="Conway A.B."/>
            <person name="Conway A.R."/>
            <person name="Creasy T.H."/>
            <person name="Dewar K."/>
            <person name="Dunn P."/>
            <person name="Etgu P."/>
            <person name="Feldblyum T.V."/>
            <person name="Feng J.-D."/>
            <person name="Fong B."/>
            <person name="Fujii C.Y."/>
            <person name="Gill J.E."/>
            <person name="Goldsmith A.D."/>
            <person name="Haas B."/>
            <person name="Hansen N.F."/>
            <person name="Hughes B."/>
            <person name="Huizar L."/>
            <person name="Hunter J.L."/>
            <person name="Jenkins J."/>
            <person name="Johnson-Hopson C."/>
            <person name="Khan S."/>
            <person name="Khaykin E."/>
            <person name="Kim C.J."/>
            <person name="Koo H.L."/>
            <person name="Kremenetskaia I."/>
            <person name="Kurtz D.B."/>
            <person name="Kwan A."/>
            <person name="Lam B."/>
            <person name="Langin-Hooper S."/>
            <person name="Lee A."/>
            <person name="Lee J.M."/>
            <person name="Lenz C.A."/>
            <person name="Li J.H."/>
            <person name="Li Y.-P."/>
            <person name="Lin X."/>
            <person name="Liu S.X."/>
            <person name="Liu Z.A."/>
            <person name="Luros J.S."/>
            <person name="Maiti R."/>
            <person name="Marziali A."/>
            <person name="Militscher J."/>
            <person name="Miranda M."/>
            <person name="Nguyen M."/>
            <person name="Nierman W.C."/>
            <person name="Osborne B.I."/>
            <person name="Pai G."/>
            <person name="Peterson J."/>
            <person name="Pham P.K."/>
            <person name="Rizzo M."/>
            <person name="Rooney T."/>
            <person name="Rowley D."/>
            <person name="Sakano H."/>
            <person name="Salzberg S.L."/>
            <person name="Schwartz J.R."/>
            <person name="Shinn P."/>
            <person name="Southwick A.M."/>
            <person name="Sun H."/>
            <person name="Tallon L.J."/>
            <person name="Tambunga G."/>
            <person name="Toriumi M.J."/>
            <person name="Town C.D."/>
            <person name="Utterback T."/>
            <person name="Van Aken S."/>
            <person name="Vaysberg M."/>
            <person name="Vysotskaia V.S."/>
            <person name="Walker M."/>
            <person name="Wu D."/>
            <person name="Yu G."/>
            <person name="Fraser C.M."/>
            <person name="Venter J.C."/>
            <person name="Davis R.W."/>
        </authorList>
    </citation>
    <scope>NUCLEOTIDE SEQUENCE [LARGE SCALE GENOMIC DNA]</scope>
    <source>
        <strain>cv. Columbia</strain>
    </source>
</reference>
<reference key="4">
    <citation type="journal article" date="2017" name="Plant J.">
        <title>Araport11: a complete reannotation of the Arabidopsis thaliana reference genome.</title>
        <authorList>
            <person name="Cheng C.Y."/>
            <person name="Krishnakumar V."/>
            <person name="Chan A.P."/>
            <person name="Thibaud-Nissen F."/>
            <person name="Schobel S."/>
            <person name="Town C.D."/>
        </authorList>
    </citation>
    <scope>GENOME REANNOTATION</scope>
    <source>
        <strain>cv. Columbia</strain>
    </source>
</reference>
<reference key="5">
    <citation type="journal article" date="2003" name="Science">
        <title>Empirical analysis of transcriptional activity in the Arabidopsis genome.</title>
        <authorList>
            <person name="Yamada K."/>
            <person name="Lim J."/>
            <person name="Dale J.M."/>
            <person name="Chen H."/>
            <person name="Shinn P."/>
            <person name="Palm C.J."/>
            <person name="Southwick A.M."/>
            <person name="Wu H.C."/>
            <person name="Kim C.J."/>
            <person name="Nguyen M."/>
            <person name="Pham P.K."/>
            <person name="Cheuk R.F."/>
            <person name="Karlin-Newmann G."/>
            <person name="Liu S.X."/>
            <person name="Lam B."/>
            <person name="Sakano H."/>
            <person name="Wu T."/>
            <person name="Yu G."/>
            <person name="Miranda M."/>
            <person name="Quach H.L."/>
            <person name="Tripp M."/>
            <person name="Chang C.H."/>
            <person name="Lee J.M."/>
            <person name="Toriumi M.J."/>
            <person name="Chan M.M."/>
            <person name="Tang C.C."/>
            <person name="Onodera C.S."/>
            <person name="Deng J.M."/>
            <person name="Akiyama K."/>
            <person name="Ansari Y."/>
            <person name="Arakawa T."/>
            <person name="Banh J."/>
            <person name="Banno F."/>
            <person name="Bowser L."/>
            <person name="Brooks S.Y."/>
            <person name="Carninci P."/>
            <person name="Chao Q."/>
            <person name="Choy N."/>
            <person name="Enju A."/>
            <person name="Goldsmith A.D."/>
            <person name="Gurjal M."/>
            <person name="Hansen N.F."/>
            <person name="Hayashizaki Y."/>
            <person name="Johnson-Hopson C."/>
            <person name="Hsuan V.W."/>
            <person name="Iida K."/>
            <person name="Karnes M."/>
            <person name="Khan S."/>
            <person name="Koesema E."/>
            <person name="Ishida J."/>
            <person name="Jiang P.X."/>
            <person name="Jones T."/>
            <person name="Kawai J."/>
            <person name="Kamiya A."/>
            <person name="Meyers C."/>
            <person name="Nakajima M."/>
            <person name="Narusaka M."/>
            <person name="Seki M."/>
            <person name="Sakurai T."/>
            <person name="Satou M."/>
            <person name="Tamse R."/>
            <person name="Vaysberg M."/>
            <person name="Wallender E.K."/>
            <person name="Wong C."/>
            <person name="Yamamura Y."/>
            <person name="Yuan S."/>
            <person name="Shinozaki K."/>
            <person name="Davis R.W."/>
            <person name="Theologis A."/>
            <person name="Ecker J.R."/>
        </authorList>
    </citation>
    <scope>NUCLEOTIDE SEQUENCE [LARGE SCALE MRNA]</scope>
    <source>
        <strain>cv. Columbia</strain>
    </source>
</reference>
<reference key="6">
    <citation type="journal article" date="2004" name="Carbohydr. Res.">
        <title>Pectin methylesterases: sequence-structural features and phylogenetic relationships.</title>
        <authorList>
            <person name="Markovic O."/>
            <person name="Janecek S."/>
        </authorList>
    </citation>
    <scope>GENE FAMILY</scope>
    <scope>NOMENCLATURE</scope>
</reference>
<reference key="7">
    <citation type="journal article" date="2006" name="Planta">
        <title>Comprehensive expression profiling of the pectin methylesterase gene family during silique development in Arabidopsis thaliana.</title>
        <authorList>
            <person name="Louvet R."/>
            <person name="Cavel E."/>
            <person name="Gutierrez L."/>
            <person name="Guenin S."/>
            <person name="Roger D."/>
            <person name="Gillet F."/>
            <person name="Guerineau F."/>
            <person name="Pelloux J."/>
        </authorList>
    </citation>
    <scope>TISSUE SPECIFICITY</scope>
    <scope>DEVELOPMENTAL STAGE</scope>
</reference>
<reference key="8">
    <citation type="journal article" date="2009" name="Plant J.">
        <title>The N-terminal pro region mediates retention of unprocessed type-I PME in the Golgi apparatus.</title>
        <authorList>
            <person name="Wolf S."/>
            <person name="Rausch T."/>
            <person name="Greiner S."/>
        </authorList>
    </citation>
    <scope>INTERACTION WITH SBT6.1</scope>
    <scope>SUBCELLULAR LOCATION</scope>
    <scope>DOMAIN</scope>
    <scope>CLEAVAGE BY SBT6.1</scope>
</reference>
<reference key="9">
    <citation type="journal article" date="2017" name="Plant Cell Environ.">
        <title>Methylation of protein phosphatase 2A-influence of regulators and environmental stress factors.</title>
        <authorList>
            <person name="Creighton M.T."/>
            <person name="Kolton A."/>
            <person name="Kataya A.R.A."/>
            <person name="Maple-Groedem J."/>
            <person name="Averkina I.O."/>
            <person name="Heidari B."/>
            <person name="Lillo C."/>
        </authorList>
    </citation>
    <scope>FUNCTION</scope>
    <scope>DISRUPTION PHENOTYPE</scope>
</reference>
<name>PME1_ARATH</name>
<sequence length="586" mass="64149">MDSVNSFKGYGKVDEAQDLALKKKTRKRLLLLSISVVVLIAVIIAAVVATVVHKNKNESTPSPPPELTPSTSLKAICSVTRFPESCISSISKLPSSNTTDPETLFKLSLKVIIDELDSISDLPEKLSKETEDERIKSALRVCGDLIEDALDRLNDTVSAIDDEEKKKTLSSSKIEDLKTWLSATVTDHETCFDSLDELKQNKTEYANSTITQNLKSAMSRSTEFTSNSLAIVSKILSALSDLGIPIHRRRRLMSHHHQQSVDFEKWARRRLLQTAGLKPDVTVAGDGTGDVLTVNEAVAKVPKKSLKMFVIYVKSGTYVENVVMDKSKWNVMIYGDGKGKTIISGSKNFVDGTPTYETATFAIQGKGFIMKDIGIINTAGAAKHQAVAFRSGSDFSVYYQCSFDGFQDTLYPHSNRQFYRDCDVTGTIDFIFGSAAVVFQGCKIMPRQPLSNQFNTITAQGKKDPNQSSGMSIQRCTISANGNVIAPTYLGRPWKEFSTTVIMETVIGAVVRPSGWMSWVSGVDPPASIVYGEYKNTGPGSDVTQRVKWAGYKPVMSDAEAAKFTVATLLHGADWIPATGVINQLS</sequence>
<dbReference type="EC" id="3.1.1.11"/>
<dbReference type="EMBL" id="X81585">
    <property type="protein sequence ID" value="CAA57275.1"/>
    <property type="molecule type" value="mRNA"/>
</dbReference>
<dbReference type="EMBL" id="U25649">
    <property type="protein sequence ID" value="AAC50024.1"/>
    <property type="molecule type" value="Genomic_DNA"/>
</dbReference>
<dbReference type="EMBL" id="AC009324">
    <property type="protein sequence ID" value="AAF02857.1"/>
    <property type="molecule type" value="Genomic_DNA"/>
</dbReference>
<dbReference type="EMBL" id="CP002684">
    <property type="protein sequence ID" value="AEE33008.1"/>
    <property type="molecule type" value="Genomic_DNA"/>
</dbReference>
<dbReference type="EMBL" id="AY054197">
    <property type="protein sequence ID" value="AAL06858.1"/>
    <property type="molecule type" value="mRNA"/>
</dbReference>
<dbReference type="PIR" id="JC4778">
    <property type="entry name" value="JC4778"/>
</dbReference>
<dbReference type="RefSeq" id="NP_175787.1">
    <property type="nucleotide sequence ID" value="NM_104261.3"/>
</dbReference>
<dbReference type="SMR" id="Q43867"/>
<dbReference type="FunCoup" id="Q43867">
    <property type="interactions" value="121"/>
</dbReference>
<dbReference type="STRING" id="3702.Q43867"/>
<dbReference type="GlyCosmos" id="Q43867">
    <property type="glycosylation" value="6 sites, No reported glycans"/>
</dbReference>
<dbReference type="GlyGen" id="Q43867">
    <property type="glycosylation" value="6 sites"/>
</dbReference>
<dbReference type="iPTMnet" id="Q43867"/>
<dbReference type="PaxDb" id="3702-AT1G53840.1"/>
<dbReference type="ProteomicsDB" id="234975"/>
<dbReference type="EnsemblPlants" id="AT1G53840.1">
    <property type="protein sequence ID" value="AT1G53840.1"/>
    <property type="gene ID" value="AT1G53840"/>
</dbReference>
<dbReference type="GeneID" id="841821"/>
<dbReference type="Gramene" id="AT1G53840.1">
    <property type="protein sequence ID" value="AT1G53840.1"/>
    <property type="gene ID" value="AT1G53840"/>
</dbReference>
<dbReference type="KEGG" id="ath:AT1G53840"/>
<dbReference type="Araport" id="AT1G53840"/>
<dbReference type="TAIR" id="AT1G53840">
    <property type="gene designation" value="PME1"/>
</dbReference>
<dbReference type="eggNOG" id="ENOG502RA2Q">
    <property type="taxonomic scope" value="Eukaryota"/>
</dbReference>
<dbReference type="HOGENOM" id="CLU_012243_9_1_1"/>
<dbReference type="InParanoid" id="Q43867"/>
<dbReference type="OMA" id="DKHKWNV"/>
<dbReference type="OrthoDB" id="2019149at2759"/>
<dbReference type="PhylomeDB" id="Q43867"/>
<dbReference type="BioCyc" id="ARA:AT1G53840-MONOMER"/>
<dbReference type="UniPathway" id="UPA00545">
    <property type="reaction ID" value="UER00823"/>
</dbReference>
<dbReference type="PRO" id="PR:Q43867"/>
<dbReference type="Proteomes" id="UP000006548">
    <property type="component" value="Chromosome 1"/>
</dbReference>
<dbReference type="ExpressionAtlas" id="Q43867">
    <property type="expression patterns" value="baseline and differential"/>
</dbReference>
<dbReference type="GO" id="GO:0005768">
    <property type="term" value="C:endosome"/>
    <property type="evidence" value="ECO:0007005"/>
    <property type="project" value="TAIR"/>
</dbReference>
<dbReference type="GO" id="GO:0005576">
    <property type="term" value="C:extracellular region"/>
    <property type="evidence" value="ECO:0000250"/>
    <property type="project" value="TAIR"/>
</dbReference>
<dbReference type="GO" id="GO:0005794">
    <property type="term" value="C:Golgi apparatus"/>
    <property type="evidence" value="ECO:0007005"/>
    <property type="project" value="TAIR"/>
</dbReference>
<dbReference type="GO" id="GO:0000139">
    <property type="term" value="C:Golgi membrane"/>
    <property type="evidence" value="ECO:0007669"/>
    <property type="project" value="UniProtKB-SubCell"/>
</dbReference>
<dbReference type="GO" id="GO:0005634">
    <property type="term" value="C:nucleus"/>
    <property type="evidence" value="ECO:0007005"/>
    <property type="project" value="TAIR"/>
</dbReference>
<dbReference type="GO" id="GO:0000325">
    <property type="term" value="C:plant-type vacuole"/>
    <property type="evidence" value="ECO:0007005"/>
    <property type="project" value="TAIR"/>
</dbReference>
<dbReference type="GO" id="GO:0005886">
    <property type="term" value="C:plasma membrane"/>
    <property type="evidence" value="ECO:0007005"/>
    <property type="project" value="TAIR"/>
</dbReference>
<dbReference type="GO" id="GO:0009506">
    <property type="term" value="C:plasmodesma"/>
    <property type="evidence" value="ECO:0007005"/>
    <property type="project" value="TAIR"/>
</dbReference>
<dbReference type="GO" id="GO:0005802">
    <property type="term" value="C:trans-Golgi network"/>
    <property type="evidence" value="ECO:0007005"/>
    <property type="project" value="TAIR"/>
</dbReference>
<dbReference type="GO" id="GO:0004857">
    <property type="term" value="F:enzyme inhibitor activity"/>
    <property type="evidence" value="ECO:0007669"/>
    <property type="project" value="InterPro"/>
</dbReference>
<dbReference type="GO" id="GO:0030599">
    <property type="term" value="F:pectinesterase activity"/>
    <property type="evidence" value="ECO:0000250"/>
    <property type="project" value="TAIR"/>
</dbReference>
<dbReference type="GO" id="GO:0051722">
    <property type="term" value="F:protein C-terminal methylesterase activity"/>
    <property type="evidence" value="ECO:0000314"/>
    <property type="project" value="UniProtKB"/>
</dbReference>
<dbReference type="GO" id="GO:0042545">
    <property type="term" value="P:cell wall modification"/>
    <property type="evidence" value="ECO:0007669"/>
    <property type="project" value="InterPro"/>
</dbReference>
<dbReference type="GO" id="GO:0071456">
    <property type="term" value="P:cellular response to hypoxia"/>
    <property type="evidence" value="ECO:0007007"/>
    <property type="project" value="TAIR"/>
</dbReference>
<dbReference type="GO" id="GO:0045490">
    <property type="term" value="P:pectin catabolic process"/>
    <property type="evidence" value="ECO:0007669"/>
    <property type="project" value="UniProtKB-UniPathway"/>
</dbReference>
<dbReference type="CDD" id="cd15798">
    <property type="entry name" value="PMEI-like_3"/>
    <property type="match status" value="1"/>
</dbReference>
<dbReference type="FunFam" id="1.20.140.40:FF:000010">
    <property type="entry name" value="Pectinesterase"/>
    <property type="match status" value="1"/>
</dbReference>
<dbReference type="FunFam" id="2.160.20.10:FF:000001">
    <property type="entry name" value="Pectinesterase"/>
    <property type="match status" value="1"/>
</dbReference>
<dbReference type="Gene3D" id="1.20.140.40">
    <property type="entry name" value="Invertase/pectin methylesterase inhibitor family protein"/>
    <property type="match status" value="1"/>
</dbReference>
<dbReference type="Gene3D" id="2.160.20.10">
    <property type="entry name" value="Single-stranded right-handed beta-helix, Pectin lyase-like"/>
    <property type="match status" value="1"/>
</dbReference>
<dbReference type="InterPro" id="IPR035513">
    <property type="entry name" value="Invertase/methylesterase_inhib"/>
</dbReference>
<dbReference type="InterPro" id="IPR012334">
    <property type="entry name" value="Pectin_lyas_fold"/>
</dbReference>
<dbReference type="InterPro" id="IPR011050">
    <property type="entry name" value="Pectin_lyase_fold/virulence"/>
</dbReference>
<dbReference type="InterPro" id="IPR033131">
    <property type="entry name" value="Pectinesterase_Asp_AS"/>
</dbReference>
<dbReference type="InterPro" id="IPR000070">
    <property type="entry name" value="Pectinesterase_cat"/>
</dbReference>
<dbReference type="InterPro" id="IPR006501">
    <property type="entry name" value="Pectinesterase_inhib_dom"/>
</dbReference>
<dbReference type="InterPro" id="IPR018040">
    <property type="entry name" value="Pectinesterase_Tyr_AS"/>
</dbReference>
<dbReference type="NCBIfam" id="TIGR01614">
    <property type="entry name" value="PME_inhib"/>
    <property type="match status" value="1"/>
</dbReference>
<dbReference type="PANTHER" id="PTHR31707">
    <property type="entry name" value="PECTINESTERASE"/>
    <property type="match status" value="1"/>
</dbReference>
<dbReference type="Pfam" id="PF01095">
    <property type="entry name" value="Pectinesterase"/>
    <property type="match status" value="1"/>
</dbReference>
<dbReference type="Pfam" id="PF04043">
    <property type="entry name" value="PMEI"/>
    <property type="match status" value="1"/>
</dbReference>
<dbReference type="SMART" id="SM00856">
    <property type="entry name" value="PMEI"/>
    <property type="match status" value="1"/>
</dbReference>
<dbReference type="SUPFAM" id="SSF51126">
    <property type="entry name" value="Pectin lyase-like"/>
    <property type="match status" value="1"/>
</dbReference>
<dbReference type="SUPFAM" id="SSF101148">
    <property type="entry name" value="Plant invertase/pectin methylesterase inhibitor"/>
    <property type="match status" value="1"/>
</dbReference>
<dbReference type="PROSITE" id="PS00800">
    <property type="entry name" value="PECTINESTERASE_1"/>
    <property type="match status" value="1"/>
</dbReference>
<dbReference type="PROSITE" id="PS00503">
    <property type="entry name" value="PECTINESTERASE_2"/>
    <property type="match status" value="1"/>
</dbReference>
<proteinExistence type="evidence at protein level"/>
<protein>
    <recommendedName>
        <fullName>Pectinesterase 1</fullName>
        <shortName>PE 1</shortName>
        <ecNumber>3.1.1.11</ecNumber>
    </recommendedName>
    <alternativeName>
        <fullName>Pectin methylesterase 1</fullName>
        <shortName>AtPME1</shortName>
    </alternativeName>
</protein>
<gene>
    <name type="primary">PME1</name>
    <name type="synonym">ARATH65</name>
    <name type="ordered locus">At1g53840</name>
    <name type="ORF">T18A20.7</name>
</gene>
<accession>Q43867</accession>
<organism>
    <name type="scientific">Arabidopsis thaliana</name>
    <name type="common">Mouse-ear cress</name>
    <dbReference type="NCBI Taxonomy" id="3702"/>
    <lineage>
        <taxon>Eukaryota</taxon>
        <taxon>Viridiplantae</taxon>
        <taxon>Streptophyta</taxon>
        <taxon>Embryophyta</taxon>
        <taxon>Tracheophyta</taxon>
        <taxon>Spermatophyta</taxon>
        <taxon>Magnoliopsida</taxon>
        <taxon>eudicotyledons</taxon>
        <taxon>Gunneridae</taxon>
        <taxon>Pentapetalae</taxon>
        <taxon>rosids</taxon>
        <taxon>malvids</taxon>
        <taxon>Brassicales</taxon>
        <taxon>Brassicaceae</taxon>
        <taxon>Camelineae</taxon>
        <taxon>Arabidopsis</taxon>
    </lineage>
</organism>
<comment type="function">
    <text evidence="2 7">Acts in the modification of cell walls via demethylesterification of cell wall pectin (By similarity). Demethylates protein phosphatase 2A (PP2A) that have been reversibly carboxymethylated by LCMT1. Acts as a negative regulators of genes involved in salt stress response (PubMed:28741704).</text>
</comment>
<comment type="catalytic activity">
    <reaction>
        <text>[(1-&gt;4)-alpha-D-galacturonosyl methyl ester](n) + n H2O = [(1-&gt;4)-alpha-D-galacturonosyl](n) + n methanol + n H(+)</text>
        <dbReference type="Rhea" id="RHEA:22380"/>
        <dbReference type="Rhea" id="RHEA-COMP:14570"/>
        <dbReference type="Rhea" id="RHEA-COMP:14573"/>
        <dbReference type="ChEBI" id="CHEBI:15377"/>
        <dbReference type="ChEBI" id="CHEBI:15378"/>
        <dbReference type="ChEBI" id="CHEBI:17790"/>
        <dbReference type="ChEBI" id="CHEBI:140522"/>
        <dbReference type="ChEBI" id="CHEBI:140523"/>
        <dbReference type="EC" id="3.1.1.11"/>
    </reaction>
</comment>
<comment type="pathway">
    <text>Glycan metabolism; pectin degradation; 2-dehydro-3-deoxy-D-gluconate from pectin: step 1/5.</text>
</comment>
<comment type="subunit">
    <text evidence="6">Interacts with SBT6.1.</text>
</comment>
<comment type="subcellular location">
    <subcellularLocation>
        <location evidence="6">Secreted</location>
        <location evidence="6">Cell wall</location>
    </subcellularLocation>
    <subcellularLocation>
        <location evidence="6">Golgi apparatus membrane</location>
    </subcellularLocation>
    <text evidence="6">Cleaved in the Golgi apparatus by SBT6.1 (S1P) after the Arg-Arg-Leu-Met (RRLM) and Arg-Arg-Leu-Leu (RRLL) motifs. This processing is required for extracellular targeting.</text>
</comment>
<comment type="tissue specificity">
    <text evidence="5">Expressed in siliques.</text>
</comment>
<comment type="developmental stage">
    <text evidence="5">Expressed throughout silique development.</text>
</comment>
<comment type="domain">
    <text evidence="9">The PMEI region may act as an autoinhibitory domain and prevent untimely PME activity during transport. The PMEI region is cleaved by SBT6.1 (S1P) in the Golgi apparatus prior to cell wall targeting.</text>
</comment>
<comment type="disruption phenotype">
    <text evidence="7">Reduced number of leaves at flowering time in long day conditions.</text>
</comment>
<comment type="similarity">
    <text evidence="8">In the N-terminal section; belongs to the PMEI family.</text>
</comment>
<comment type="similarity">
    <text evidence="8">In the C-terminal section; belongs to the pectinesterase family.</text>
</comment>
<evidence type="ECO:0000250" key="1"/>
<evidence type="ECO:0000250" key="2">
    <source>
        <dbReference type="UniProtKB" id="Q5MFV8"/>
    </source>
</evidence>
<evidence type="ECO:0000255" key="3"/>
<evidence type="ECO:0000255" key="4">
    <source>
        <dbReference type="PROSITE-ProRule" id="PRU10040"/>
    </source>
</evidence>
<evidence type="ECO:0000269" key="5">
    <source>
    </source>
</evidence>
<evidence type="ECO:0000269" key="6">
    <source>
    </source>
</evidence>
<evidence type="ECO:0000269" key="7">
    <source>
    </source>
</evidence>
<evidence type="ECO:0000305" key="8"/>
<evidence type="ECO:0000305" key="9">
    <source>
    </source>
</evidence>
<feature type="signal peptide" evidence="3">
    <location>
        <begin position="1"/>
        <end position="49"/>
    </location>
</feature>
<feature type="chain" id="PRO_0000023474" description="Pectinesterase 1">
    <location>
        <begin position="50"/>
        <end position="586"/>
    </location>
</feature>
<feature type="short sequence motif" description="RRLM cleavage motif" evidence="9">
    <location>
        <begin position="250"/>
        <end position="253"/>
    </location>
</feature>
<feature type="short sequence motif" description="RRLL cleavage motif" evidence="9">
    <location>
        <begin position="269"/>
        <end position="272"/>
    </location>
</feature>
<feature type="active site" description="Proton donor" evidence="4">
    <location>
        <position position="408"/>
    </location>
</feature>
<feature type="active site" description="Nucleophile" evidence="4">
    <location>
        <position position="429"/>
    </location>
</feature>
<feature type="binding site" evidence="1">
    <location>
        <position position="355"/>
    </location>
    <ligand>
        <name>substrate</name>
    </ligand>
</feature>
<feature type="binding site" evidence="1">
    <location>
        <position position="385"/>
    </location>
    <ligand>
        <name>substrate</name>
    </ligand>
</feature>
<feature type="binding site" evidence="1">
    <location>
        <position position="492"/>
    </location>
    <ligand>
        <name>substrate</name>
    </ligand>
</feature>
<feature type="binding site" evidence="1">
    <location>
        <position position="494"/>
    </location>
    <ligand>
        <name>substrate</name>
    </ligand>
</feature>
<feature type="site" description="Transition state stabilizer" evidence="1">
    <location>
        <position position="407"/>
    </location>
</feature>
<feature type="glycosylation site" description="N-linked (GlcNAc...) asparagine" evidence="3">
    <location>
        <position position="57"/>
    </location>
</feature>
<feature type="glycosylation site" description="N-linked (GlcNAc...) asparagine" evidence="3">
    <location>
        <position position="97"/>
    </location>
</feature>
<feature type="glycosylation site" description="N-linked (GlcNAc...) asparagine" evidence="3">
    <location>
        <position position="154"/>
    </location>
</feature>
<feature type="glycosylation site" description="N-linked (GlcNAc...) asparagine" evidence="3">
    <location>
        <position position="201"/>
    </location>
</feature>
<feature type="glycosylation site" description="N-linked (GlcNAc...) asparagine" evidence="3">
    <location>
        <position position="207"/>
    </location>
</feature>
<feature type="glycosylation site" description="N-linked (GlcNAc...) asparagine" evidence="3">
    <location>
        <position position="466"/>
    </location>
</feature>
<feature type="disulfide bond" evidence="1">
    <location>
        <begin position="422"/>
        <end position="442"/>
    </location>
</feature>